<dbReference type="EC" id="2.1.1.-" evidence="1"/>
<dbReference type="EMBL" id="Z34299">
    <property type="protein sequence ID" value="CAA84069.1"/>
    <property type="molecule type" value="mRNA"/>
</dbReference>
<dbReference type="EMBL" id="CU329672">
    <property type="protein sequence ID" value="CAA19342.1"/>
    <property type="molecule type" value="Genomic_DNA"/>
</dbReference>
<dbReference type="PIR" id="JC2442">
    <property type="entry name" value="JC2442"/>
</dbReference>
<dbReference type="RefSeq" id="NP_588157.1">
    <property type="nucleotide sequence ID" value="NM_001023146.2"/>
</dbReference>
<dbReference type="SMR" id="P40389"/>
<dbReference type="BioGRID" id="275617">
    <property type="interactions" value="3"/>
</dbReference>
<dbReference type="FunCoup" id="P40389">
    <property type="interactions" value="35"/>
</dbReference>
<dbReference type="STRING" id="284812.P40389"/>
<dbReference type="PaxDb" id="4896-SPCC338.11c.1"/>
<dbReference type="EnsemblFungi" id="SPCC338.11c.1">
    <property type="protein sequence ID" value="SPCC338.11c.1:pep"/>
    <property type="gene ID" value="SPCC338.11c"/>
</dbReference>
<dbReference type="GeneID" id="2539044"/>
<dbReference type="KEGG" id="spo:2539044"/>
<dbReference type="PomBase" id="SPCC338.11c">
    <property type="gene designation" value="rrg1"/>
</dbReference>
<dbReference type="VEuPathDB" id="FungiDB:SPCC338.11c"/>
<dbReference type="eggNOG" id="KOG2793">
    <property type="taxonomic scope" value="Eukaryota"/>
</dbReference>
<dbReference type="HOGENOM" id="CLU_049351_1_1_1"/>
<dbReference type="InParanoid" id="P40389"/>
<dbReference type="OMA" id="CWWSIWG"/>
<dbReference type="PhylomeDB" id="P40389"/>
<dbReference type="PRO" id="PR:P40389"/>
<dbReference type="Proteomes" id="UP000002485">
    <property type="component" value="Chromosome III"/>
</dbReference>
<dbReference type="GO" id="GO:0005829">
    <property type="term" value="C:cytosol"/>
    <property type="evidence" value="ECO:0007005"/>
    <property type="project" value="PomBase"/>
</dbReference>
<dbReference type="GO" id="GO:0005634">
    <property type="term" value="C:nucleus"/>
    <property type="evidence" value="ECO:0007669"/>
    <property type="project" value="UniProtKB-SubCell"/>
</dbReference>
<dbReference type="GO" id="GO:0008276">
    <property type="term" value="F:protein methyltransferase activity"/>
    <property type="evidence" value="ECO:0000318"/>
    <property type="project" value="GO_Central"/>
</dbReference>
<dbReference type="GO" id="GO:0016279">
    <property type="term" value="F:protein-lysine N-methyltransferase activity"/>
    <property type="evidence" value="ECO:0000266"/>
    <property type="project" value="PomBase"/>
</dbReference>
<dbReference type="GO" id="GO:0032259">
    <property type="term" value="P:methylation"/>
    <property type="evidence" value="ECO:0007669"/>
    <property type="project" value="UniProtKB-KW"/>
</dbReference>
<dbReference type="GO" id="GO:2000765">
    <property type="term" value="P:regulation of cytoplasmic translation"/>
    <property type="evidence" value="ECO:0000266"/>
    <property type="project" value="PomBase"/>
</dbReference>
<dbReference type="CDD" id="cd02440">
    <property type="entry name" value="AdoMet_MTases"/>
    <property type="match status" value="1"/>
</dbReference>
<dbReference type="FunFam" id="3.40.50.150:FF:001208">
    <property type="entry name" value="Protein-lysine N-methyltransferase rrg1"/>
    <property type="match status" value="1"/>
</dbReference>
<dbReference type="Gene3D" id="3.40.50.150">
    <property type="entry name" value="Vaccinia Virus protein VP39"/>
    <property type="match status" value="1"/>
</dbReference>
<dbReference type="InterPro" id="IPR019410">
    <property type="entry name" value="Methyltransf_16"/>
</dbReference>
<dbReference type="InterPro" id="IPR029063">
    <property type="entry name" value="SAM-dependent_MTases_sf"/>
</dbReference>
<dbReference type="PANTHER" id="PTHR14614">
    <property type="entry name" value="HEPATOCELLULAR CARCINOMA-ASSOCIATED ANTIGEN"/>
    <property type="match status" value="1"/>
</dbReference>
<dbReference type="PANTHER" id="PTHR14614:SF132">
    <property type="entry name" value="PROTEIN-LYSINE METHYLTRANSFERASE C42C1.13"/>
    <property type="match status" value="1"/>
</dbReference>
<dbReference type="Pfam" id="PF10294">
    <property type="entry name" value="Methyltransf_16"/>
    <property type="match status" value="1"/>
</dbReference>
<dbReference type="SUPFAM" id="SSF53335">
    <property type="entry name" value="S-adenosyl-L-methionine-dependent methyltransferases"/>
    <property type="match status" value="1"/>
</dbReference>
<evidence type="ECO:0000250" key="1">
    <source>
        <dbReference type="UniProtKB" id="P38347"/>
    </source>
</evidence>
<evidence type="ECO:0000250" key="2">
    <source>
        <dbReference type="UniProtKB" id="Q9H867"/>
    </source>
</evidence>
<evidence type="ECO:0000269" key="3">
    <source>
    </source>
</evidence>
<evidence type="ECO:0000269" key="4">
    <source>
    </source>
</evidence>
<evidence type="ECO:0000303" key="5">
    <source>
    </source>
</evidence>
<evidence type="ECO:0000303" key="6">
    <source>
    </source>
</evidence>
<evidence type="ECO:0000305" key="7"/>
<evidence type="ECO:0000305" key="8">
    <source>
    </source>
</evidence>
<evidence type="ECO:0000305" key="9">
    <source>
    </source>
</evidence>
<evidence type="ECO:0000312" key="10">
    <source>
        <dbReference type="PomBase" id="SPCC338.11c"/>
    </source>
</evidence>
<name>RRG1_SCHPO</name>
<proteinExistence type="evidence at transcript level"/>
<sequence>MILEDTDLPLSHEQPSYSQIKDVLDKIPTGEHLWDLPKYEEKIILNWLIKLLATNLEWITVEEERDYLVSTICERIAERSGRLAAPTRKREFSLSNGVSVVLREPTMTYNTLGFKTWGSAPLLSANLPKWEDLSNSINALELGAGTGLVGISAAIQLGWQVVCTDLPDIVENMQYNVDYNSELIQQYAGSVSCHVLDWMNPPDDDNRPSWLIKPFQRIIASDCIYETHFGELAIALFRKYLAKDGIVITEYPLRETHLEEIGVFEKGMDAAGFERQMGEEIGEEDFGSLYPVTCRWSRWKYHG</sequence>
<accession>P40389</accession>
<reference key="1">
    <citation type="journal article" date="1994" name="Biochem. Biophys. Res. Commun.">
        <title>Isolation of UV-inducible transcripts from Schizosaccharomyces pombe.</title>
        <authorList>
            <person name="Lee J.K."/>
            <person name="Park E.J."/>
            <person name="Chung H.K."/>
            <person name="Hong S.H."/>
            <person name="Joe C.O."/>
            <person name="Park S.D."/>
        </authorList>
    </citation>
    <scope>NUCLEOTIDE SEQUENCE [MRNA]</scope>
    <source>
        <strain>JY741</strain>
    </source>
</reference>
<reference key="2">
    <citation type="journal article" date="2002" name="Nature">
        <title>The genome sequence of Schizosaccharomyces pombe.</title>
        <authorList>
            <person name="Wood V."/>
            <person name="Gwilliam R."/>
            <person name="Rajandream M.A."/>
            <person name="Lyne M.H."/>
            <person name="Lyne R."/>
            <person name="Stewart A."/>
            <person name="Sgouros J.G."/>
            <person name="Peat N."/>
            <person name="Hayles J."/>
            <person name="Baker S.G."/>
            <person name="Basham D."/>
            <person name="Bowman S."/>
            <person name="Brooks K."/>
            <person name="Brown D."/>
            <person name="Brown S."/>
            <person name="Chillingworth T."/>
            <person name="Churcher C.M."/>
            <person name="Collins M."/>
            <person name="Connor R."/>
            <person name="Cronin A."/>
            <person name="Davis P."/>
            <person name="Feltwell T."/>
            <person name="Fraser A."/>
            <person name="Gentles S."/>
            <person name="Goble A."/>
            <person name="Hamlin N."/>
            <person name="Harris D.E."/>
            <person name="Hidalgo J."/>
            <person name="Hodgson G."/>
            <person name="Holroyd S."/>
            <person name="Hornsby T."/>
            <person name="Howarth S."/>
            <person name="Huckle E.J."/>
            <person name="Hunt S."/>
            <person name="Jagels K."/>
            <person name="James K.D."/>
            <person name="Jones L."/>
            <person name="Jones M."/>
            <person name="Leather S."/>
            <person name="McDonald S."/>
            <person name="McLean J."/>
            <person name="Mooney P."/>
            <person name="Moule S."/>
            <person name="Mungall K.L."/>
            <person name="Murphy L.D."/>
            <person name="Niblett D."/>
            <person name="Odell C."/>
            <person name="Oliver K."/>
            <person name="O'Neil S."/>
            <person name="Pearson D."/>
            <person name="Quail M.A."/>
            <person name="Rabbinowitsch E."/>
            <person name="Rutherford K.M."/>
            <person name="Rutter S."/>
            <person name="Saunders D."/>
            <person name="Seeger K."/>
            <person name="Sharp S."/>
            <person name="Skelton J."/>
            <person name="Simmonds M.N."/>
            <person name="Squares R."/>
            <person name="Squares S."/>
            <person name="Stevens K."/>
            <person name="Taylor K."/>
            <person name="Taylor R.G."/>
            <person name="Tivey A."/>
            <person name="Walsh S.V."/>
            <person name="Warren T."/>
            <person name="Whitehead S."/>
            <person name="Woodward J.R."/>
            <person name="Volckaert G."/>
            <person name="Aert R."/>
            <person name="Robben J."/>
            <person name="Grymonprez B."/>
            <person name="Weltjens I."/>
            <person name="Vanstreels E."/>
            <person name="Rieger M."/>
            <person name="Schaefer M."/>
            <person name="Mueller-Auer S."/>
            <person name="Gabel C."/>
            <person name="Fuchs M."/>
            <person name="Duesterhoeft A."/>
            <person name="Fritzc C."/>
            <person name="Holzer E."/>
            <person name="Moestl D."/>
            <person name="Hilbert H."/>
            <person name="Borzym K."/>
            <person name="Langer I."/>
            <person name="Beck A."/>
            <person name="Lehrach H."/>
            <person name="Reinhardt R."/>
            <person name="Pohl T.M."/>
            <person name="Eger P."/>
            <person name="Zimmermann W."/>
            <person name="Wedler H."/>
            <person name="Wambutt R."/>
            <person name="Purnelle B."/>
            <person name="Goffeau A."/>
            <person name="Cadieu E."/>
            <person name="Dreano S."/>
            <person name="Gloux S."/>
            <person name="Lelaure V."/>
            <person name="Mottier S."/>
            <person name="Galibert F."/>
            <person name="Aves S.J."/>
            <person name="Xiang Z."/>
            <person name="Hunt C."/>
            <person name="Moore K."/>
            <person name="Hurst S.M."/>
            <person name="Lucas M."/>
            <person name="Rochet M."/>
            <person name="Gaillardin C."/>
            <person name="Tallada V.A."/>
            <person name="Garzon A."/>
            <person name="Thode G."/>
            <person name="Daga R.R."/>
            <person name="Cruzado L."/>
            <person name="Jimenez J."/>
            <person name="Sanchez M."/>
            <person name="del Rey F."/>
            <person name="Benito J."/>
            <person name="Dominguez A."/>
            <person name="Revuelta J.L."/>
            <person name="Moreno S."/>
            <person name="Armstrong J."/>
            <person name="Forsburg S.L."/>
            <person name="Cerutti L."/>
            <person name="Lowe T."/>
            <person name="McCombie W.R."/>
            <person name="Paulsen I."/>
            <person name="Potashkin J."/>
            <person name="Shpakovski G.V."/>
            <person name="Ussery D."/>
            <person name="Barrell B.G."/>
            <person name="Nurse P."/>
        </authorList>
    </citation>
    <scope>NUCLEOTIDE SEQUENCE [LARGE SCALE GENOMIC DNA]</scope>
    <source>
        <strain>972 / ATCC 24843</strain>
    </source>
</reference>
<reference key="3">
    <citation type="journal article" date="2002" name="Nucleic Acids Res.">
        <title>Glucose-inducible expression of rrg1+ in Schizosaccharomyces pombe: post-transcriptional regulation of mRNA stability mediated by the downstream region of the poly(A) site.</title>
        <authorList>
            <person name="Kim M.J."/>
            <person name="Kim J.B."/>
            <person name="Kim D.S."/>
            <person name="Park S.D."/>
        </authorList>
    </citation>
    <scope>INDUCTION</scope>
</reference>
<reference key="4">
    <citation type="journal article" date="2006" name="Nat. Biotechnol.">
        <title>ORFeome cloning and global analysis of protein localization in the fission yeast Schizosaccharomyces pombe.</title>
        <authorList>
            <person name="Matsuyama A."/>
            <person name="Arai R."/>
            <person name="Yashiroda Y."/>
            <person name="Shirai A."/>
            <person name="Kamata A."/>
            <person name="Sekido S."/>
            <person name="Kobayashi Y."/>
            <person name="Hashimoto A."/>
            <person name="Hamamoto M."/>
            <person name="Hiraoka Y."/>
            <person name="Horinouchi S."/>
            <person name="Yoshida M."/>
        </authorList>
    </citation>
    <scope>SUBCELLULAR LOCATION [LARGE SCALE ANALYSIS]</scope>
</reference>
<protein>
    <recommendedName>
        <fullName evidence="1 7">Protein-lysine N-methyltransferase rrg1</fullName>
        <ecNumber evidence="1">2.1.1.-</ecNumber>
    </recommendedName>
    <alternativeName>
        <fullName evidence="1">Elongation factor methyltransferase 2</fullName>
    </alternativeName>
    <alternativeName>
        <fullName evidence="5">Rapid response to glucose protein 1</fullName>
    </alternativeName>
</protein>
<comment type="function">
    <text evidence="1">S-adenosyl-L-methionine-dependent protein-lysine N-methyltransferase that methylates elongation factor 2 and elongation factor 3A.</text>
</comment>
<comment type="subcellular location">
    <subcellularLocation>
        <location evidence="4">Cytoplasm</location>
    </subcellularLocation>
    <subcellularLocation>
        <location evidence="4">Nucleus</location>
    </subcellularLocation>
</comment>
<comment type="induction">
    <text evidence="3">By glucose, sucrose and fructose.</text>
</comment>
<comment type="similarity">
    <text evidence="7">Belongs to the class I-like SAM-binding methyltransferase superfamily. METTL21 family.</text>
</comment>
<comment type="caution">
    <text evidence="8 9">Was originally (PubMed:8048925) thought to be induced by UV light and alkylating agents. The authors from PubMed:11861905 have found from further investigation that it is induced and regulated by glucose.</text>
</comment>
<keyword id="KW-0963">Cytoplasm</keyword>
<keyword id="KW-0489">Methyltransferase</keyword>
<keyword id="KW-0539">Nucleus</keyword>
<keyword id="KW-1185">Reference proteome</keyword>
<keyword id="KW-0949">S-adenosyl-L-methionine</keyword>
<keyword id="KW-0808">Transferase</keyword>
<gene>
    <name evidence="5" type="primary">rrg1</name>
    <name evidence="6" type="synonym">uvi22</name>
    <name evidence="10" type="ORF">SPCC338.11c</name>
</gene>
<organism>
    <name type="scientific">Schizosaccharomyces pombe (strain 972 / ATCC 24843)</name>
    <name type="common">Fission yeast</name>
    <dbReference type="NCBI Taxonomy" id="284812"/>
    <lineage>
        <taxon>Eukaryota</taxon>
        <taxon>Fungi</taxon>
        <taxon>Dikarya</taxon>
        <taxon>Ascomycota</taxon>
        <taxon>Taphrinomycotina</taxon>
        <taxon>Schizosaccharomycetes</taxon>
        <taxon>Schizosaccharomycetales</taxon>
        <taxon>Schizosaccharomycetaceae</taxon>
        <taxon>Schizosaccharomyces</taxon>
    </lineage>
</organism>
<feature type="chain" id="PRO_0000097443" description="Protein-lysine N-methyltransferase rrg1">
    <location>
        <begin position="1"/>
        <end position="303"/>
    </location>
</feature>
<feature type="binding site" evidence="2">
    <location>
        <position position="117"/>
    </location>
    <ligand>
        <name>S-adenosyl-L-methionine</name>
        <dbReference type="ChEBI" id="CHEBI:59789"/>
    </ligand>
</feature>
<feature type="binding site" evidence="2">
    <location>
        <begin position="143"/>
        <end position="145"/>
    </location>
    <ligand>
        <name>S-adenosyl-L-methionine</name>
        <dbReference type="ChEBI" id="CHEBI:59789"/>
    </ligand>
</feature>
<feature type="binding site" evidence="2">
    <location>
        <position position="165"/>
    </location>
    <ligand>
        <name>S-adenosyl-L-methionine</name>
        <dbReference type="ChEBI" id="CHEBI:59789"/>
    </ligand>
</feature>
<feature type="binding site" evidence="2">
    <location>
        <position position="198"/>
    </location>
    <ligand>
        <name>S-adenosyl-L-methionine</name>
        <dbReference type="ChEBI" id="CHEBI:59789"/>
    </ligand>
</feature>
<feature type="binding site" evidence="2">
    <location>
        <position position="221"/>
    </location>
    <ligand>
        <name>S-adenosyl-L-methionine</name>
        <dbReference type="ChEBI" id="CHEBI:59789"/>
    </ligand>
</feature>